<proteinExistence type="inferred from homology"/>
<evidence type="ECO:0000250" key="1"/>
<evidence type="ECO:0000255" key="2">
    <source>
        <dbReference type="PROSITE-ProRule" id="PRU00541"/>
    </source>
</evidence>
<evidence type="ECO:0000255" key="3">
    <source>
        <dbReference type="PROSITE-ProRule" id="PRU00542"/>
    </source>
</evidence>
<evidence type="ECO:0000256" key="4">
    <source>
        <dbReference type="SAM" id="MobiDB-lite"/>
    </source>
</evidence>
<evidence type="ECO:0000305" key="5"/>
<dbReference type="EC" id="3.6.4.13"/>
<dbReference type="EMBL" id="AAEY01000010">
    <property type="protein sequence ID" value="EAL22497.1"/>
    <property type="molecule type" value="Genomic_DNA"/>
</dbReference>
<dbReference type="RefSeq" id="XP_777144.1">
    <property type="nucleotide sequence ID" value="XM_772051.1"/>
</dbReference>
<dbReference type="SMR" id="P0CQ99"/>
<dbReference type="EnsemblFungi" id="AAW41818">
    <property type="protein sequence ID" value="AAW41818"/>
    <property type="gene ID" value="CNB01970"/>
</dbReference>
<dbReference type="GeneID" id="4934469"/>
<dbReference type="KEGG" id="cnb:CNBB3750"/>
<dbReference type="VEuPathDB" id="FungiDB:CNBB3750"/>
<dbReference type="HOGENOM" id="CLU_003041_0_2_1"/>
<dbReference type="OrthoDB" id="8038at5206"/>
<dbReference type="GO" id="GO:0005634">
    <property type="term" value="C:nucleus"/>
    <property type="evidence" value="ECO:0007669"/>
    <property type="project" value="UniProtKB-SubCell"/>
</dbReference>
<dbReference type="GO" id="GO:0005524">
    <property type="term" value="F:ATP binding"/>
    <property type="evidence" value="ECO:0007669"/>
    <property type="project" value="UniProtKB-KW"/>
</dbReference>
<dbReference type="GO" id="GO:0016887">
    <property type="term" value="F:ATP hydrolysis activity"/>
    <property type="evidence" value="ECO:0007669"/>
    <property type="project" value="RHEA"/>
</dbReference>
<dbReference type="GO" id="GO:0003676">
    <property type="term" value="F:nucleic acid binding"/>
    <property type="evidence" value="ECO:0007669"/>
    <property type="project" value="InterPro"/>
</dbReference>
<dbReference type="GO" id="GO:0003724">
    <property type="term" value="F:RNA helicase activity"/>
    <property type="evidence" value="ECO:0007669"/>
    <property type="project" value="UniProtKB-EC"/>
</dbReference>
<dbReference type="GO" id="GO:0006397">
    <property type="term" value="P:mRNA processing"/>
    <property type="evidence" value="ECO:0007669"/>
    <property type="project" value="UniProtKB-KW"/>
</dbReference>
<dbReference type="GO" id="GO:0008380">
    <property type="term" value="P:RNA splicing"/>
    <property type="evidence" value="ECO:0007669"/>
    <property type="project" value="UniProtKB-KW"/>
</dbReference>
<dbReference type="CDD" id="cd17953">
    <property type="entry name" value="DEADc_DDX46"/>
    <property type="match status" value="1"/>
</dbReference>
<dbReference type="CDD" id="cd22474">
    <property type="entry name" value="KH-I_PRP5_like"/>
    <property type="match status" value="1"/>
</dbReference>
<dbReference type="CDD" id="cd18787">
    <property type="entry name" value="SF2_C_DEAD"/>
    <property type="match status" value="1"/>
</dbReference>
<dbReference type="FunFam" id="3.40.50.300:FF:000079">
    <property type="entry name" value="probable ATP-dependent RNA helicase DDX17"/>
    <property type="match status" value="1"/>
</dbReference>
<dbReference type="Gene3D" id="3.40.50.300">
    <property type="entry name" value="P-loop containing nucleotide triphosphate hydrolases"/>
    <property type="match status" value="2"/>
</dbReference>
<dbReference type="InterPro" id="IPR011545">
    <property type="entry name" value="DEAD/DEAH_box_helicase_dom"/>
</dbReference>
<dbReference type="InterPro" id="IPR014001">
    <property type="entry name" value="Helicase_ATP-bd"/>
</dbReference>
<dbReference type="InterPro" id="IPR001650">
    <property type="entry name" value="Helicase_C-like"/>
</dbReference>
<dbReference type="InterPro" id="IPR027417">
    <property type="entry name" value="P-loop_NTPase"/>
</dbReference>
<dbReference type="InterPro" id="IPR056149">
    <property type="entry name" value="PRP5/DDX46/KHDC4_KH"/>
</dbReference>
<dbReference type="InterPro" id="IPR000629">
    <property type="entry name" value="RNA-helicase_DEAD-box_CS"/>
</dbReference>
<dbReference type="InterPro" id="IPR014014">
    <property type="entry name" value="RNA_helicase_DEAD_Q_motif"/>
</dbReference>
<dbReference type="PANTHER" id="PTHR47958">
    <property type="entry name" value="ATP-DEPENDENT RNA HELICASE DBP3"/>
    <property type="match status" value="1"/>
</dbReference>
<dbReference type="Pfam" id="PF00270">
    <property type="entry name" value="DEAD"/>
    <property type="match status" value="1"/>
</dbReference>
<dbReference type="Pfam" id="PF00271">
    <property type="entry name" value="Helicase_C"/>
    <property type="match status" value="1"/>
</dbReference>
<dbReference type="Pfam" id="PF23469">
    <property type="entry name" value="KH_12"/>
    <property type="match status" value="1"/>
</dbReference>
<dbReference type="SMART" id="SM00487">
    <property type="entry name" value="DEXDc"/>
    <property type="match status" value="1"/>
</dbReference>
<dbReference type="SMART" id="SM00490">
    <property type="entry name" value="HELICc"/>
    <property type="match status" value="1"/>
</dbReference>
<dbReference type="SUPFAM" id="SSF52540">
    <property type="entry name" value="P-loop containing nucleoside triphosphate hydrolases"/>
    <property type="match status" value="1"/>
</dbReference>
<dbReference type="PROSITE" id="PS00039">
    <property type="entry name" value="DEAD_ATP_HELICASE"/>
    <property type="match status" value="1"/>
</dbReference>
<dbReference type="PROSITE" id="PS51192">
    <property type="entry name" value="HELICASE_ATP_BIND_1"/>
    <property type="match status" value="1"/>
</dbReference>
<dbReference type="PROSITE" id="PS51194">
    <property type="entry name" value="HELICASE_CTER"/>
    <property type="match status" value="1"/>
</dbReference>
<dbReference type="PROSITE" id="PS51195">
    <property type="entry name" value="Q_MOTIF"/>
    <property type="match status" value="1"/>
</dbReference>
<keyword id="KW-0067">ATP-binding</keyword>
<keyword id="KW-0347">Helicase</keyword>
<keyword id="KW-0378">Hydrolase</keyword>
<keyword id="KW-0507">mRNA processing</keyword>
<keyword id="KW-0508">mRNA splicing</keyword>
<keyword id="KW-0547">Nucleotide-binding</keyword>
<keyword id="KW-0539">Nucleus</keyword>
<organism>
    <name type="scientific">Cryptococcus neoformans var. neoformans serotype D (strain B-3501A)</name>
    <name type="common">Filobasidiella neoformans</name>
    <dbReference type="NCBI Taxonomy" id="283643"/>
    <lineage>
        <taxon>Eukaryota</taxon>
        <taxon>Fungi</taxon>
        <taxon>Dikarya</taxon>
        <taxon>Basidiomycota</taxon>
        <taxon>Agaricomycotina</taxon>
        <taxon>Tremellomycetes</taxon>
        <taxon>Tremellales</taxon>
        <taxon>Cryptococcaceae</taxon>
        <taxon>Cryptococcus</taxon>
        <taxon>Cryptococcus neoformans species complex</taxon>
    </lineage>
</organism>
<protein>
    <recommendedName>
        <fullName>Pre-mRNA-processing ATP-dependent RNA helicase PRP5</fullName>
        <ecNumber>3.6.4.13</ecNumber>
    </recommendedName>
</protein>
<reference key="1">
    <citation type="journal article" date="2005" name="Science">
        <title>The genome of the basidiomycetous yeast and human pathogen Cryptococcus neoformans.</title>
        <authorList>
            <person name="Loftus B.J."/>
            <person name="Fung E."/>
            <person name="Roncaglia P."/>
            <person name="Rowley D."/>
            <person name="Amedeo P."/>
            <person name="Bruno D."/>
            <person name="Vamathevan J."/>
            <person name="Miranda M."/>
            <person name="Anderson I.J."/>
            <person name="Fraser J.A."/>
            <person name="Allen J.E."/>
            <person name="Bosdet I.E."/>
            <person name="Brent M.R."/>
            <person name="Chiu R."/>
            <person name="Doering T.L."/>
            <person name="Donlin M.J."/>
            <person name="D'Souza C.A."/>
            <person name="Fox D.S."/>
            <person name="Grinberg V."/>
            <person name="Fu J."/>
            <person name="Fukushima M."/>
            <person name="Haas B.J."/>
            <person name="Huang J.C."/>
            <person name="Janbon G."/>
            <person name="Jones S.J.M."/>
            <person name="Koo H.L."/>
            <person name="Krzywinski M.I."/>
            <person name="Kwon-Chung K.J."/>
            <person name="Lengeler K.B."/>
            <person name="Maiti R."/>
            <person name="Marra M.A."/>
            <person name="Marra R.E."/>
            <person name="Mathewson C.A."/>
            <person name="Mitchell T.G."/>
            <person name="Pertea M."/>
            <person name="Riggs F.R."/>
            <person name="Salzberg S.L."/>
            <person name="Schein J.E."/>
            <person name="Shvartsbeyn A."/>
            <person name="Shin H."/>
            <person name="Shumway M."/>
            <person name="Specht C.A."/>
            <person name="Suh B.B."/>
            <person name="Tenney A."/>
            <person name="Utterback T.R."/>
            <person name="Wickes B.L."/>
            <person name="Wortman J.R."/>
            <person name="Wye N.H."/>
            <person name="Kronstad J.W."/>
            <person name="Lodge J.K."/>
            <person name="Heitman J."/>
            <person name="Davis R.W."/>
            <person name="Fraser C.M."/>
            <person name="Hyman R.W."/>
        </authorList>
    </citation>
    <scope>NUCLEOTIDE SEQUENCE [LARGE SCALE GENOMIC DNA]</scope>
    <source>
        <strain>B-3501A</strain>
    </source>
</reference>
<sequence length="1072" mass="119710">MPRSPYRSSNRSYRSPSPSRYDRSHPSSSSRRQDDRKASRYDDDYSRDRERDRERERDRTRDYRDRDRDYDRRRDKDRYRDDDRDRRRRDDKDDRRREERDRGSDRKRDSERRSPMSTIRVDPIVSLASPVPETEEEKKRKAKERLETWKRQRALKEGKSAAATPEPKSTAPPPVTSGLPPKPTAFSLSRIGLPLKPTNPTPLKRSMAALDDEDTSDRKLQKLDLPDFDPEVQSGDAAQVGSIGADLAVADGDEDDDTVVKKEEEKEEKMDIDKKAEEDEEEDPLDAFMRDNVQQVVEVNKADAKRMGLRVAEDGSDDENQGQVVEKDKLAEAEALLQQAAAKSRKKDLPPPDHSKIDYEPFRKAFYVPPVEVLEMDEEEAELVRLEMDGIKIRGQDAPKPVRNWGAFGLPQGCLDVIKHQGWETPTSIQAQAIPAIMSGRDVIGIAKTGSGKTVAFLLPMLRHVRDQRPVSGSEGPIAVVMSPTRELASQIYKECQPFLKVLNIRASCCVGGSSISEDIAAMKKGAEVVICTPGRMIDLLTANNGRVTNVRRTTYIVMDEADRMFDMGFEPQVMKIINNVRPSAQKVLFSATFPKTMESLARRILVKPLEITVGGRSVVAPEIDQRVEVRDGDTKFTRLLEILGEMGEEHKDEDDFRTLIFVDRQESADDLFRELLQRGYVCASLHGGKEQVDRDEAIKNFKNGDVPIIVATSVAARGLDVKELKLVINYDAPNHMEDYVHRAGRTGRAGNKGTCITFITPEQERFSVDIVRALEASKAFIPDDLKKMSDSFLGKIKSGKARAAGSGYSGKGLERIERRREEKDRAEKTTYGDTSEALSLSSREGAVIPYKAKTNEFKPPETSHKGEADYTFTEIKVDIVNGPAPDRVSSQPVFNPKNAVASLPAQTLAALEKAKKEGRGVDAANLANVVAKLTQSIELTKAEKLGLAAATSAPRLAPGARTKDPDATDWHAIFPINDYPQKARWKATNKEQMTLLQEVSGASITMRGRFYPPGEEPALGGEPKLSLLIESNDEMRVRAAVEEIRRVLVEGSVQALNAVDRAGASGGRYAV</sequence>
<comment type="function">
    <text evidence="1">ATP-dependent RNA helicase involved spliceosome assembly and in nuclear splicing. Catalyzes an ATP-dependent conformational change of U2 snRNP. Bridges U1 and U2 snRNPs and enables stable U2 snRNP association with intron RNA (By similarity).</text>
</comment>
<comment type="catalytic activity">
    <reaction>
        <text>ATP + H2O = ADP + phosphate + H(+)</text>
        <dbReference type="Rhea" id="RHEA:13065"/>
        <dbReference type="ChEBI" id="CHEBI:15377"/>
        <dbReference type="ChEBI" id="CHEBI:15378"/>
        <dbReference type="ChEBI" id="CHEBI:30616"/>
        <dbReference type="ChEBI" id="CHEBI:43474"/>
        <dbReference type="ChEBI" id="CHEBI:456216"/>
        <dbReference type="EC" id="3.6.4.13"/>
    </reaction>
</comment>
<comment type="subcellular location">
    <subcellularLocation>
        <location evidence="1">Nucleus</location>
    </subcellularLocation>
</comment>
<comment type="domain">
    <text>The Q motif is unique to and characteristic of the DEAD box family of RNA helicases and controls ATP binding and hydrolysis.</text>
</comment>
<comment type="similarity">
    <text evidence="5">Belongs to the DEAD box helicase family. DDX46/PRP5 subfamily.</text>
</comment>
<gene>
    <name type="primary">PRP5</name>
    <name type="ordered locus">CNBB3750</name>
</gene>
<name>PRP5_CRYNB</name>
<accession>P0CQ99</accession>
<accession>Q55XI8</accession>
<accession>Q5KME7</accession>
<feature type="chain" id="PRO_0000410260" description="Pre-mRNA-processing ATP-dependent RNA helicase PRP5">
    <location>
        <begin position="1"/>
        <end position="1072"/>
    </location>
</feature>
<feature type="domain" description="Helicase ATP-binding" evidence="2">
    <location>
        <begin position="434"/>
        <end position="612"/>
    </location>
</feature>
<feature type="domain" description="Helicase C-terminal" evidence="3">
    <location>
        <begin position="639"/>
        <end position="790"/>
    </location>
</feature>
<feature type="region of interest" description="Disordered" evidence="4">
    <location>
        <begin position="1"/>
        <end position="219"/>
    </location>
</feature>
<feature type="region of interest" description="Disordered" evidence="4">
    <location>
        <begin position="245"/>
        <end position="293"/>
    </location>
</feature>
<feature type="region of interest" description="Disordered" evidence="4">
    <location>
        <begin position="803"/>
        <end position="839"/>
    </location>
</feature>
<feature type="short sequence motif" description="Q motif">
    <location>
        <begin position="403"/>
        <end position="431"/>
    </location>
</feature>
<feature type="short sequence motif" description="DEAD box">
    <location>
        <begin position="560"/>
        <end position="563"/>
    </location>
</feature>
<feature type="compositionally biased region" description="Low complexity" evidence="4">
    <location>
        <begin position="1"/>
        <end position="19"/>
    </location>
</feature>
<feature type="compositionally biased region" description="Basic and acidic residues" evidence="4">
    <location>
        <begin position="20"/>
        <end position="114"/>
    </location>
</feature>
<feature type="compositionally biased region" description="Basic and acidic residues" evidence="4">
    <location>
        <begin position="136"/>
        <end position="159"/>
    </location>
</feature>
<feature type="compositionally biased region" description="Pro residues" evidence="4">
    <location>
        <begin position="170"/>
        <end position="183"/>
    </location>
</feature>
<feature type="compositionally biased region" description="Low complexity" evidence="4">
    <location>
        <begin position="193"/>
        <end position="204"/>
    </location>
</feature>
<feature type="compositionally biased region" description="Basic and acidic residues" evidence="4">
    <location>
        <begin position="258"/>
        <end position="277"/>
    </location>
</feature>
<feature type="compositionally biased region" description="Basic and acidic residues" evidence="4">
    <location>
        <begin position="813"/>
        <end position="831"/>
    </location>
</feature>
<feature type="binding site" evidence="2">
    <location>
        <begin position="447"/>
        <end position="454"/>
    </location>
    <ligand>
        <name>ATP</name>
        <dbReference type="ChEBI" id="CHEBI:30616"/>
    </ligand>
</feature>